<feature type="chain" id="PRO_0000144817" description="A-type ATP synthase subunit F">
    <location>
        <begin position="1"/>
        <end position="101"/>
    </location>
</feature>
<keyword id="KW-0066">ATP synthesis</keyword>
<keyword id="KW-1003">Cell membrane</keyword>
<keyword id="KW-0375">Hydrogen ion transport</keyword>
<keyword id="KW-0406">Ion transport</keyword>
<keyword id="KW-0472">Membrane</keyword>
<keyword id="KW-1185">Reference proteome</keyword>
<keyword id="KW-0813">Transport</keyword>
<name>AATF_METAC</name>
<organism>
    <name type="scientific">Methanosarcina acetivorans (strain ATCC 35395 / DSM 2834 / JCM 12185 / C2A)</name>
    <dbReference type="NCBI Taxonomy" id="188937"/>
    <lineage>
        <taxon>Archaea</taxon>
        <taxon>Methanobacteriati</taxon>
        <taxon>Methanobacteriota</taxon>
        <taxon>Stenosarchaea group</taxon>
        <taxon>Methanomicrobia</taxon>
        <taxon>Methanosarcinales</taxon>
        <taxon>Methanosarcinaceae</taxon>
        <taxon>Methanosarcina</taxon>
    </lineage>
</organism>
<dbReference type="EMBL" id="AE010299">
    <property type="protein sequence ID" value="AAM07505.1"/>
    <property type="molecule type" value="Genomic_DNA"/>
</dbReference>
<dbReference type="RefSeq" id="WP_011024045.1">
    <property type="nucleotide sequence ID" value="NC_003552.1"/>
</dbReference>
<dbReference type="SMR" id="Q8TIJ2"/>
<dbReference type="FunCoup" id="Q8TIJ2">
    <property type="interactions" value="43"/>
</dbReference>
<dbReference type="STRING" id="188937.MA_4157"/>
<dbReference type="EnsemblBacteria" id="AAM07505">
    <property type="protein sequence ID" value="AAM07505"/>
    <property type="gene ID" value="MA_4157"/>
</dbReference>
<dbReference type="GeneID" id="1476051"/>
<dbReference type="KEGG" id="mac:MA_4157"/>
<dbReference type="HOGENOM" id="CLU_135754_2_2_2"/>
<dbReference type="InParanoid" id="Q8TIJ2"/>
<dbReference type="OrthoDB" id="24971at2157"/>
<dbReference type="PhylomeDB" id="Q8TIJ2"/>
<dbReference type="Proteomes" id="UP000002487">
    <property type="component" value="Chromosome"/>
</dbReference>
<dbReference type="GO" id="GO:0005886">
    <property type="term" value="C:plasma membrane"/>
    <property type="evidence" value="ECO:0007669"/>
    <property type="project" value="UniProtKB-SubCell"/>
</dbReference>
<dbReference type="GO" id="GO:0005524">
    <property type="term" value="F:ATP binding"/>
    <property type="evidence" value="ECO:0007669"/>
    <property type="project" value="UniProtKB-UniRule"/>
</dbReference>
<dbReference type="GO" id="GO:0046933">
    <property type="term" value="F:proton-transporting ATP synthase activity, rotational mechanism"/>
    <property type="evidence" value="ECO:0007669"/>
    <property type="project" value="UniProtKB-UniRule"/>
</dbReference>
<dbReference type="GO" id="GO:0046961">
    <property type="term" value="F:proton-transporting ATPase activity, rotational mechanism"/>
    <property type="evidence" value="ECO:0007669"/>
    <property type="project" value="InterPro"/>
</dbReference>
<dbReference type="GO" id="GO:0042777">
    <property type="term" value="P:proton motive force-driven plasma membrane ATP synthesis"/>
    <property type="evidence" value="ECO:0007669"/>
    <property type="project" value="UniProtKB-UniRule"/>
</dbReference>
<dbReference type="Gene3D" id="3.40.50.10580">
    <property type="entry name" value="ATPase, V1 complex, subunit F"/>
    <property type="match status" value="1"/>
</dbReference>
<dbReference type="HAMAP" id="MF_00312">
    <property type="entry name" value="ATP_synth_F_arch"/>
    <property type="match status" value="1"/>
</dbReference>
<dbReference type="InterPro" id="IPR008218">
    <property type="entry name" value="ATPase_V1-cplx_f_g_su"/>
</dbReference>
<dbReference type="InterPro" id="IPR022944">
    <property type="entry name" value="ATPase_V1-cplx_fsu_bac/arc"/>
</dbReference>
<dbReference type="InterPro" id="IPR036906">
    <property type="entry name" value="ATPase_V1_fsu_sf"/>
</dbReference>
<dbReference type="NCBIfam" id="NF002577">
    <property type="entry name" value="PRK02228.1"/>
    <property type="match status" value="1"/>
</dbReference>
<dbReference type="Pfam" id="PF01990">
    <property type="entry name" value="ATP-synt_F"/>
    <property type="match status" value="1"/>
</dbReference>
<dbReference type="SUPFAM" id="SSF159468">
    <property type="entry name" value="AtpF-like"/>
    <property type="match status" value="1"/>
</dbReference>
<proteinExistence type="inferred from homology"/>
<gene>
    <name evidence="1" type="primary">atpF</name>
    <name type="ordered locus">MA_4157</name>
</gene>
<accession>Q8TIJ2</accession>
<sequence length="101" mass="10967">MELAVIGKSEFVTGFRLAGIRKVYEIVDVPSSESAVKSVLEDKSIGILVMHNDDISNLPEILRRNLNESVQPTVVALGGTGEGSMSLRDKIKQAVGVDLWK</sequence>
<reference key="1">
    <citation type="journal article" date="2002" name="Genome Res.">
        <title>The genome of Methanosarcina acetivorans reveals extensive metabolic and physiological diversity.</title>
        <authorList>
            <person name="Galagan J.E."/>
            <person name="Nusbaum C."/>
            <person name="Roy A."/>
            <person name="Endrizzi M.G."/>
            <person name="Macdonald P."/>
            <person name="FitzHugh W."/>
            <person name="Calvo S."/>
            <person name="Engels R."/>
            <person name="Smirnov S."/>
            <person name="Atnoor D."/>
            <person name="Brown A."/>
            <person name="Allen N."/>
            <person name="Naylor J."/>
            <person name="Stange-Thomann N."/>
            <person name="DeArellano K."/>
            <person name="Johnson R."/>
            <person name="Linton L."/>
            <person name="McEwan P."/>
            <person name="McKernan K."/>
            <person name="Talamas J."/>
            <person name="Tirrell A."/>
            <person name="Ye W."/>
            <person name="Zimmer A."/>
            <person name="Barber R.D."/>
            <person name="Cann I."/>
            <person name="Graham D.E."/>
            <person name="Grahame D.A."/>
            <person name="Guss A.M."/>
            <person name="Hedderich R."/>
            <person name="Ingram-Smith C."/>
            <person name="Kuettner H.C."/>
            <person name="Krzycki J.A."/>
            <person name="Leigh J.A."/>
            <person name="Li W."/>
            <person name="Liu J."/>
            <person name="Mukhopadhyay B."/>
            <person name="Reeve J.N."/>
            <person name="Smith K."/>
            <person name="Springer T.A."/>
            <person name="Umayam L.A."/>
            <person name="White O."/>
            <person name="White R.H."/>
            <person name="de Macario E.C."/>
            <person name="Ferry J.G."/>
            <person name="Jarrell K.F."/>
            <person name="Jing H."/>
            <person name="Macario A.J.L."/>
            <person name="Paulsen I.T."/>
            <person name="Pritchett M."/>
            <person name="Sowers K.R."/>
            <person name="Swanson R.V."/>
            <person name="Zinder S.H."/>
            <person name="Lander E."/>
            <person name="Metcalf W.W."/>
            <person name="Birren B."/>
        </authorList>
    </citation>
    <scope>NUCLEOTIDE SEQUENCE [LARGE SCALE GENOMIC DNA]</scope>
    <source>
        <strain>ATCC 35395 / DSM 2834 / JCM 12185 / C2A</strain>
    </source>
</reference>
<protein>
    <recommendedName>
        <fullName evidence="1">A-type ATP synthase subunit F</fullName>
    </recommendedName>
</protein>
<evidence type="ECO:0000255" key="1">
    <source>
        <dbReference type="HAMAP-Rule" id="MF_00312"/>
    </source>
</evidence>
<comment type="function">
    <text evidence="1">Component of the A-type ATP synthase that produces ATP from ADP in the presence of a proton gradient across the membrane.</text>
</comment>
<comment type="subunit">
    <text evidence="1">Has multiple subunits with at least A(3), B(3), C, D, E, F, H, I and proteolipid K(x).</text>
</comment>
<comment type="subcellular location">
    <subcellularLocation>
        <location evidence="1">Cell membrane</location>
        <topology evidence="1">Peripheral membrane protein</topology>
    </subcellularLocation>
</comment>
<comment type="similarity">
    <text evidence="1">Belongs to the V-ATPase F subunit family.</text>
</comment>